<gene>
    <name evidence="1" type="primary">rpsB</name>
    <name type="ordered locus">KPN78578_01810</name>
    <name type="ORF">KPN_00182</name>
</gene>
<sequence>MATVSMRDMLKAGVHFGHQTRYWNPKMKPFIFGARNKVHIINLEKTVPMFNEALAELNKIAARKGKILFVGTKRAASEAVKDAALSCDQFFVNHRWLGGMLTNWKTVRQSIKRLKDLETQSQDGTFDKLTKKEALMRTRELDKLENSLGGIKDMGGLPDALFVIDADHEHIAIKEANNLGIPVFAIVDTNSDPDGVDFVIPGNDDAIRAVSLYLGAVAATVREGRSQDLASQAEESFVEAE</sequence>
<keyword id="KW-0687">Ribonucleoprotein</keyword>
<keyword id="KW-0689">Ribosomal protein</keyword>
<organism>
    <name type="scientific">Klebsiella pneumoniae subsp. pneumoniae (strain ATCC 700721 / MGH 78578)</name>
    <dbReference type="NCBI Taxonomy" id="272620"/>
    <lineage>
        <taxon>Bacteria</taxon>
        <taxon>Pseudomonadati</taxon>
        <taxon>Pseudomonadota</taxon>
        <taxon>Gammaproteobacteria</taxon>
        <taxon>Enterobacterales</taxon>
        <taxon>Enterobacteriaceae</taxon>
        <taxon>Klebsiella/Raoultella group</taxon>
        <taxon>Klebsiella</taxon>
        <taxon>Klebsiella pneumoniae complex</taxon>
    </lineage>
</organism>
<reference key="1">
    <citation type="submission" date="2006-09" db="EMBL/GenBank/DDBJ databases">
        <authorList>
            <consortium name="The Klebsiella pneumonia Genome Sequencing Project"/>
            <person name="McClelland M."/>
            <person name="Sanderson E.K."/>
            <person name="Spieth J."/>
            <person name="Clifton W.S."/>
            <person name="Latreille P."/>
            <person name="Sabo A."/>
            <person name="Pepin K."/>
            <person name="Bhonagiri V."/>
            <person name="Porwollik S."/>
            <person name="Ali J."/>
            <person name="Wilson R.K."/>
        </authorList>
    </citation>
    <scope>NUCLEOTIDE SEQUENCE [LARGE SCALE GENOMIC DNA]</scope>
    <source>
        <strain>ATCC 700721 / MGH 78578</strain>
    </source>
</reference>
<feature type="chain" id="PRO_0000351998" description="Small ribosomal subunit protein uS2">
    <location>
        <begin position="1"/>
        <end position="241"/>
    </location>
</feature>
<dbReference type="EMBL" id="CP000647">
    <property type="protein sequence ID" value="ABR75642.1"/>
    <property type="status" value="ALT_INIT"/>
    <property type="molecule type" value="Genomic_DNA"/>
</dbReference>
<dbReference type="RefSeq" id="WP_002889299.1">
    <property type="nucleotide sequence ID" value="NC_009648.1"/>
</dbReference>
<dbReference type="SMR" id="A6T4X1"/>
<dbReference type="STRING" id="272620.KPN_00182"/>
<dbReference type="jPOST" id="A6T4X1"/>
<dbReference type="PaxDb" id="272620-KPN_00182"/>
<dbReference type="EnsemblBacteria" id="ABR75642">
    <property type="protein sequence ID" value="ABR75642"/>
    <property type="gene ID" value="KPN_00182"/>
</dbReference>
<dbReference type="KEGG" id="kpn:KPN_00182"/>
<dbReference type="HOGENOM" id="CLU_040318_1_2_6"/>
<dbReference type="Proteomes" id="UP000000265">
    <property type="component" value="Chromosome"/>
</dbReference>
<dbReference type="GO" id="GO:0022627">
    <property type="term" value="C:cytosolic small ribosomal subunit"/>
    <property type="evidence" value="ECO:0007669"/>
    <property type="project" value="TreeGrafter"/>
</dbReference>
<dbReference type="GO" id="GO:0003735">
    <property type="term" value="F:structural constituent of ribosome"/>
    <property type="evidence" value="ECO:0007669"/>
    <property type="project" value="InterPro"/>
</dbReference>
<dbReference type="GO" id="GO:0006412">
    <property type="term" value="P:translation"/>
    <property type="evidence" value="ECO:0007669"/>
    <property type="project" value="UniProtKB-UniRule"/>
</dbReference>
<dbReference type="CDD" id="cd01425">
    <property type="entry name" value="RPS2"/>
    <property type="match status" value="1"/>
</dbReference>
<dbReference type="FunFam" id="1.10.287.610:FF:000001">
    <property type="entry name" value="30S ribosomal protein S2"/>
    <property type="match status" value="1"/>
</dbReference>
<dbReference type="Gene3D" id="3.40.50.10490">
    <property type="entry name" value="Glucose-6-phosphate isomerase like protein, domain 1"/>
    <property type="match status" value="1"/>
</dbReference>
<dbReference type="Gene3D" id="1.10.287.610">
    <property type="entry name" value="Helix hairpin bin"/>
    <property type="match status" value="1"/>
</dbReference>
<dbReference type="HAMAP" id="MF_00291_B">
    <property type="entry name" value="Ribosomal_uS2_B"/>
    <property type="match status" value="1"/>
</dbReference>
<dbReference type="InterPro" id="IPR001865">
    <property type="entry name" value="Ribosomal_uS2"/>
</dbReference>
<dbReference type="InterPro" id="IPR005706">
    <property type="entry name" value="Ribosomal_uS2_bac/mit/plastid"/>
</dbReference>
<dbReference type="InterPro" id="IPR018130">
    <property type="entry name" value="Ribosomal_uS2_CS"/>
</dbReference>
<dbReference type="InterPro" id="IPR023591">
    <property type="entry name" value="Ribosomal_uS2_flav_dom_sf"/>
</dbReference>
<dbReference type="NCBIfam" id="TIGR01011">
    <property type="entry name" value="rpsB_bact"/>
    <property type="match status" value="1"/>
</dbReference>
<dbReference type="PANTHER" id="PTHR12534">
    <property type="entry name" value="30S RIBOSOMAL PROTEIN S2 PROKARYOTIC AND ORGANELLAR"/>
    <property type="match status" value="1"/>
</dbReference>
<dbReference type="PANTHER" id="PTHR12534:SF0">
    <property type="entry name" value="SMALL RIBOSOMAL SUBUNIT PROTEIN US2M"/>
    <property type="match status" value="1"/>
</dbReference>
<dbReference type="Pfam" id="PF00318">
    <property type="entry name" value="Ribosomal_S2"/>
    <property type="match status" value="1"/>
</dbReference>
<dbReference type="PRINTS" id="PR00395">
    <property type="entry name" value="RIBOSOMALS2"/>
</dbReference>
<dbReference type="SUPFAM" id="SSF52313">
    <property type="entry name" value="Ribosomal protein S2"/>
    <property type="match status" value="1"/>
</dbReference>
<dbReference type="PROSITE" id="PS00962">
    <property type="entry name" value="RIBOSOMAL_S2_1"/>
    <property type="match status" value="1"/>
</dbReference>
<dbReference type="PROSITE" id="PS00963">
    <property type="entry name" value="RIBOSOMAL_S2_2"/>
    <property type="match status" value="1"/>
</dbReference>
<evidence type="ECO:0000255" key="1">
    <source>
        <dbReference type="HAMAP-Rule" id="MF_00291"/>
    </source>
</evidence>
<evidence type="ECO:0000305" key="2"/>
<protein>
    <recommendedName>
        <fullName evidence="1">Small ribosomal subunit protein uS2</fullName>
    </recommendedName>
    <alternativeName>
        <fullName evidence="2">30S ribosomal protein S2</fullName>
    </alternativeName>
</protein>
<proteinExistence type="inferred from homology"/>
<name>RS2_KLEP7</name>
<accession>A6T4X1</accession>
<comment type="similarity">
    <text evidence="1">Belongs to the universal ribosomal protein uS2 family.</text>
</comment>
<comment type="sequence caution" evidence="2">
    <conflict type="erroneous initiation">
        <sequence resource="EMBL-CDS" id="ABR75642"/>
    </conflict>
</comment>